<accession>P9WP48</accession>
<accession>A7Y0H9</accession>
<accession>F2GHV9</accession>
<accession>P71543</accession>
<accession>Q7D919</accession>
<dbReference type="EMBL" id="AE000516">
    <property type="protein sequence ID" value="AAK45244.1"/>
    <property type="molecule type" value="Genomic_DNA"/>
</dbReference>
<dbReference type="PIR" id="E70718">
    <property type="entry name" value="E70718"/>
</dbReference>
<dbReference type="RefSeq" id="WP_003404935.1">
    <property type="nucleotide sequence ID" value="NZ_KK341227.1"/>
</dbReference>
<dbReference type="SMR" id="P9WP48"/>
<dbReference type="KEGG" id="mtc:MT0995"/>
<dbReference type="PATRIC" id="fig|83331.31.peg.1067"/>
<dbReference type="HOGENOM" id="CLU_130332_1_1_11"/>
<dbReference type="Proteomes" id="UP000001020">
    <property type="component" value="Chromosome"/>
</dbReference>
<dbReference type="GO" id="GO:0005737">
    <property type="term" value="C:cytoplasm"/>
    <property type="evidence" value="ECO:0007669"/>
    <property type="project" value="UniProtKB-SubCell"/>
</dbReference>
<dbReference type="GO" id="GO:0003677">
    <property type="term" value="F:DNA binding"/>
    <property type="evidence" value="ECO:0007669"/>
    <property type="project" value="UniProtKB-KW"/>
</dbReference>
<dbReference type="GO" id="GO:0046872">
    <property type="term" value="F:metal ion binding"/>
    <property type="evidence" value="ECO:0007669"/>
    <property type="project" value="UniProtKB-KW"/>
</dbReference>
<dbReference type="GO" id="GO:0045892">
    <property type="term" value="P:negative regulation of DNA-templated transcription"/>
    <property type="evidence" value="ECO:0007669"/>
    <property type="project" value="UniProtKB-ARBA"/>
</dbReference>
<dbReference type="CDD" id="cd10151">
    <property type="entry name" value="TthCsoR-like_DUF156"/>
    <property type="match status" value="1"/>
</dbReference>
<dbReference type="FunFam" id="1.20.58.1000:FF:000004">
    <property type="entry name" value="Copper-sensing transcriptional repressor CsoR"/>
    <property type="match status" value="1"/>
</dbReference>
<dbReference type="Gene3D" id="1.20.58.1000">
    <property type="entry name" value="Metal-sensitive repressor, helix protomer"/>
    <property type="match status" value="1"/>
</dbReference>
<dbReference type="InterPro" id="IPR003735">
    <property type="entry name" value="Metal_Tscrpt_repr"/>
</dbReference>
<dbReference type="InterPro" id="IPR038390">
    <property type="entry name" value="Metal_Tscrpt_repr_sf"/>
</dbReference>
<dbReference type="PANTHER" id="PTHR33677:SF4">
    <property type="entry name" value="COPPER-SENSING TRANSCRIPTIONAL REPRESSOR CSOR"/>
    <property type="match status" value="1"/>
</dbReference>
<dbReference type="PANTHER" id="PTHR33677">
    <property type="entry name" value="TRANSCRIPTIONAL REPRESSOR FRMR-RELATED"/>
    <property type="match status" value="1"/>
</dbReference>
<dbReference type="Pfam" id="PF02583">
    <property type="entry name" value="Trns_repr_metal"/>
    <property type="match status" value="1"/>
</dbReference>
<protein>
    <recommendedName>
        <fullName>Copper-sensing transcriptional repressor CsoR</fullName>
    </recommendedName>
    <alternativeName>
        <fullName>Copper-sensitive operon repressor</fullName>
    </alternativeName>
</protein>
<name>CSOR_MYCTO</name>
<organism>
    <name type="scientific">Mycobacterium tuberculosis (strain CDC 1551 / Oshkosh)</name>
    <dbReference type="NCBI Taxonomy" id="83331"/>
    <lineage>
        <taxon>Bacteria</taxon>
        <taxon>Bacillati</taxon>
        <taxon>Actinomycetota</taxon>
        <taxon>Actinomycetes</taxon>
        <taxon>Mycobacteriales</taxon>
        <taxon>Mycobacteriaceae</taxon>
        <taxon>Mycobacterium</taxon>
        <taxon>Mycobacterium tuberculosis complex</taxon>
    </lineage>
</organism>
<evidence type="ECO:0000250" key="1"/>
<evidence type="ECO:0000256" key="2">
    <source>
        <dbReference type="SAM" id="MobiDB-lite"/>
    </source>
</evidence>
<evidence type="ECO:0000305" key="3"/>
<feature type="chain" id="PRO_0000427014" description="Copper-sensing transcriptional repressor CsoR">
    <location>
        <begin position="1"/>
        <end position="119"/>
    </location>
</feature>
<feature type="region of interest" description="Disordered" evidence="2">
    <location>
        <begin position="99"/>
        <end position="119"/>
    </location>
</feature>
<feature type="binding site" description="in other chain" evidence="1">
    <location>
        <position position="36"/>
    </location>
    <ligand>
        <name>Cu cation</name>
        <dbReference type="ChEBI" id="CHEBI:23378"/>
        <note>ligand shared between dimeric partners</note>
    </ligand>
</feature>
<feature type="binding site" evidence="1">
    <location>
        <position position="61"/>
    </location>
    <ligand>
        <name>Cu cation</name>
        <dbReference type="ChEBI" id="CHEBI:23378"/>
        <note>ligand shared between dimeric partners</note>
    </ligand>
</feature>
<feature type="binding site" evidence="1">
    <location>
        <position position="65"/>
    </location>
    <ligand>
        <name>Cu cation</name>
        <dbReference type="ChEBI" id="CHEBI:23378"/>
        <note>ligand shared between dimeric partners</note>
    </ligand>
</feature>
<comment type="function">
    <text evidence="1">Copper-sensitive repressor that has a key role in copper homeostasis. It is part of the cso operon involved in the cellular response to increasing concentrations of copper inside the bacterium, which can be highly toxic. In the presence of copper, CsoR fully dissociates from the promoter in the cso operon, leading to the transcription of its genes (By similarity).</text>
</comment>
<comment type="subunit">
    <text evidence="1">Homodimer.</text>
</comment>
<comment type="subcellular location">
    <subcellularLocation>
        <location evidence="1">Cytoplasm</location>
    </subcellularLocation>
</comment>
<comment type="similarity">
    <text evidence="3">Belongs to the CsoR family.</text>
</comment>
<reference key="1">
    <citation type="journal article" date="2002" name="J. Bacteriol.">
        <title>Whole-genome comparison of Mycobacterium tuberculosis clinical and laboratory strains.</title>
        <authorList>
            <person name="Fleischmann R.D."/>
            <person name="Alland D."/>
            <person name="Eisen J.A."/>
            <person name="Carpenter L."/>
            <person name="White O."/>
            <person name="Peterson J.D."/>
            <person name="DeBoy R.T."/>
            <person name="Dodson R.J."/>
            <person name="Gwinn M.L."/>
            <person name="Haft D.H."/>
            <person name="Hickey E.K."/>
            <person name="Kolonay J.F."/>
            <person name="Nelson W.C."/>
            <person name="Umayam L.A."/>
            <person name="Ermolaeva M.D."/>
            <person name="Salzberg S.L."/>
            <person name="Delcher A."/>
            <person name="Utterback T.R."/>
            <person name="Weidman J.F."/>
            <person name="Khouri H.M."/>
            <person name="Gill J."/>
            <person name="Mikula A."/>
            <person name="Bishai W."/>
            <person name="Jacobs W.R. Jr."/>
            <person name="Venter J.C."/>
            <person name="Fraser C.M."/>
        </authorList>
    </citation>
    <scope>NUCLEOTIDE SEQUENCE [LARGE SCALE GENOMIC DNA]</scope>
    <source>
        <strain>CDC 1551 / Oshkosh</strain>
    </source>
</reference>
<sequence>MSKELTAKKRAALNRLKTVRGHLDGIVRMLESDAYCVDVMKQISAVQSSLERANRVMLHNHLETCFSTAVLDGHGQAAIEELIDAVKFTPALTGPHARLGGAAVGESATEEPMPDASNM</sequence>
<keyword id="KW-0186">Copper</keyword>
<keyword id="KW-0963">Cytoplasm</keyword>
<keyword id="KW-0238">DNA-binding</keyword>
<keyword id="KW-0479">Metal-binding</keyword>
<keyword id="KW-1185">Reference proteome</keyword>
<keyword id="KW-0678">Repressor</keyword>
<keyword id="KW-0804">Transcription</keyword>
<keyword id="KW-0805">Transcription regulation</keyword>
<proteinExistence type="inferred from homology"/>
<gene>
    <name type="primary">csoR</name>
    <name type="synonym">croR</name>
    <name type="ordered locus">MT0995</name>
</gene>